<gene>
    <name type="primary">rps15</name>
</gene>
<sequence length="87" mass="10445">MVKNSVISVISQEEKRGSVEFQVFNFTNKIRRLTSHLELHKKDYLSQRGLKKILGKRQRLLAYLSKKNRVRYKELINQLDIRETKTR</sequence>
<accession>Q33BW5</accession>
<proteinExistence type="inferred from homology"/>
<keyword id="KW-0150">Chloroplast</keyword>
<keyword id="KW-0934">Plastid</keyword>
<keyword id="KW-0687">Ribonucleoprotein</keyword>
<keyword id="KW-0689">Ribosomal protein</keyword>
<dbReference type="EMBL" id="AB240139">
    <property type="protein sequence ID" value="BAE48070.1"/>
    <property type="molecule type" value="Genomic_DNA"/>
</dbReference>
<dbReference type="RefSeq" id="YP_398930.1">
    <property type="nucleotide sequence ID" value="NC_007602.1"/>
</dbReference>
<dbReference type="SMR" id="Q33BW5"/>
<dbReference type="GeneID" id="3776384"/>
<dbReference type="KEGG" id="nto:3776384"/>
<dbReference type="OrthoDB" id="441444at2759"/>
<dbReference type="GO" id="GO:0009507">
    <property type="term" value="C:chloroplast"/>
    <property type="evidence" value="ECO:0007669"/>
    <property type="project" value="UniProtKB-SubCell"/>
</dbReference>
<dbReference type="GO" id="GO:1990904">
    <property type="term" value="C:ribonucleoprotein complex"/>
    <property type="evidence" value="ECO:0007669"/>
    <property type="project" value="UniProtKB-KW"/>
</dbReference>
<dbReference type="GO" id="GO:0005840">
    <property type="term" value="C:ribosome"/>
    <property type="evidence" value="ECO:0007669"/>
    <property type="project" value="UniProtKB-KW"/>
</dbReference>
<dbReference type="GO" id="GO:0003735">
    <property type="term" value="F:structural constituent of ribosome"/>
    <property type="evidence" value="ECO:0007669"/>
    <property type="project" value="InterPro"/>
</dbReference>
<dbReference type="GO" id="GO:0006412">
    <property type="term" value="P:translation"/>
    <property type="evidence" value="ECO:0007669"/>
    <property type="project" value="UniProtKB-UniRule"/>
</dbReference>
<dbReference type="CDD" id="cd00353">
    <property type="entry name" value="Ribosomal_S15p_S13e"/>
    <property type="match status" value="1"/>
</dbReference>
<dbReference type="Gene3D" id="1.10.287.10">
    <property type="entry name" value="S15/NS1, RNA-binding"/>
    <property type="match status" value="1"/>
</dbReference>
<dbReference type="HAMAP" id="MF_01343_B">
    <property type="entry name" value="Ribosomal_uS15_B"/>
    <property type="match status" value="1"/>
</dbReference>
<dbReference type="InterPro" id="IPR000589">
    <property type="entry name" value="Ribosomal_uS15"/>
</dbReference>
<dbReference type="InterPro" id="IPR005290">
    <property type="entry name" value="Ribosomal_uS15_bac-type"/>
</dbReference>
<dbReference type="InterPro" id="IPR009068">
    <property type="entry name" value="uS15_NS1_RNA-bd_sf"/>
</dbReference>
<dbReference type="NCBIfam" id="TIGR00952">
    <property type="entry name" value="S15_bact"/>
    <property type="match status" value="1"/>
</dbReference>
<dbReference type="PANTHER" id="PTHR23321">
    <property type="entry name" value="RIBOSOMAL PROTEIN S15, BACTERIAL AND ORGANELLAR"/>
    <property type="match status" value="1"/>
</dbReference>
<dbReference type="PANTHER" id="PTHR23321:SF26">
    <property type="entry name" value="SMALL RIBOSOMAL SUBUNIT PROTEIN US15M"/>
    <property type="match status" value="1"/>
</dbReference>
<dbReference type="Pfam" id="PF00312">
    <property type="entry name" value="Ribosomal_S15"/>
    <property type="match status" value="1"/>
</dbReference>
<dbReference type="SMART" id="SM01387">
    <property type="entry name" value="Ribosomal_S15"/>
    <property type="match status" value="1"/>
</dbReference>
<dbReference type="SUPFAM" id="SSF47060">
    <property type="entry name" value="S15/NS1 RNA-binding domain"/>
    <property type="match status" value="1"/>
</dbReference>
<dbReference type="PROSITE" id="PS00362">
    <property type="entry name" value="RIBOSOMAL_S15"/>
    <property type="match status" value="1"/>
</dbReference>
<evidence type="ECO:0000250" key="1"/>
<evidence type="ECO:0000305" key="2"/>
<name>RR15_NICTO</name>
<comment type="subunit">
    <text evidence="1">Part of the 30S ribosomal subunit.</text>
</comment>
<comment type="subcellular location">
    <subcellularLocation>
        <location>Plastid</location>
        <location>Chloroplast</location>
    </subcellularLocation>
</comment>
<comment type="similarity">
    <text evidence="2">Belongs to the universal ribosomal protein uS15 family.</text>
</comment>
<geneLocation type="chloroplast"/>
<feature type="chain" id="PRO_0000115639" description="Small ribosomal subunit protein uS15c">
    <location>
        <begin position="1"/>
        <end position="87"/>
    </location>
</feature>
<organism>
    <name type="scientific">Nicotiana tomentosiformis</name>
    <name type="common">Tobacco</name>
    <dbReference type="NCBI Taxonomy" id="4098"/>
    <lineage>
        <taxon>Eukaryota</taxon>
        <taxon>Viridiplantae</taxon>
        <taxon>Streptophyta</taxon>
        <taxon>Embryophyta</taxon>
        <taxon>Tracheophyta</taxon>
        <taxon>Spermatophyta</taxon>
        <taxon>Magnoliopsida</taxon>
        <taxon>eudicotyledons</taxon>
        <taxon>Gunneridae</taxon>
        <taxon>Pentapetalae</taxon>
        <taxon>asterids</taxon>
        <taxon>lamiids</taxon>
        <taxon>Solanales</taxon>
        <taxon>Solanaceae</taxon>
        <taxon>Nicotianoideae</taxon>
        <taxon>Nicotianeae</taxon>
        <taxon>Nicotiana</taxon>
    </lineage>
</organism>
<reference key="1">
    <citation type="journal article" date="2006" name="Mol. Genet. Genomics">
        <title>The chloroplast genome of Nicotiana sylvestris and Nicotiana tomentosiformis: complete sequencing confirms that the Nicotiana sylvestris progenitor is the maternal genome donor of Nicotiana tabacum.</title>
        <authorList>
            <person name="Yukawa M."/>
            <person name="Tsudzuki T."/>
            <person name="Sugiura M."/>
        </authorList>
    </citation>
    <scope>NUCLEOTIDE SEQUENCE [LARGE SCALE GENOMIC DNA]</scope>
</reference>
<protein>
    <recommendedName>
        <fullName evidence="2">Small ribosomal subunit protein uS15c</fullName>
    </recommendedName>
    <alternativeName>
        <fullName>30S ribosomal protein S15, chloroplastic</fullName>
    </alternativeName>
</protein>